<name>RQL4A_ARATH</name>
<feature type="chain" id="PRO_0000394529" description="ATP-dependent DNA helicase Q-like 4A">
    <location>
        <begin position="1"/>
        <end position="1188"/>
    </location>
</feature>
<feature type="domain" description="Helicase ATP-binding" evidence="5">
    <location>
        <begin position="462"/>
        <end position="637"/>
    </location>
</feature>
<feature type="domain" description="Helicase C-terminal" evidence="6">
    <location>
        <begin position="662"/>
        <end position="807"/>
    </location>
</feature>
<feature type="domain" description="HRDC" evidence="4">
    <location>
        <begin position="1018"/>
        <end position="1100"/>
    </location>
</feature>
<feature type="region of interest" description="Disordered" evidence="7">
    <location>
        <begin position="1"/>
        <end position="25"/>
    </location>
</feature>
<feature type="region of interest" description="Disordered" evidence="7">
    <location>
        <begin position="988"/>
        <end position="1015"/>
    </location>
</feature>
<feature type="region of interest" description="Disordered" evidence="7">
    <location>
        <begin position="1102"/>
        <end position="1147"/>
    </location>
</feature>
<feature type="region of interest" description="Disordered" evidence="7">
    <location>
        <begin position="1168"/>
        <end position="1188"/>
    </location>
</feature>
<feature type="coiled-coil region" evidence="3">
    <location>
        <begin position="311"/>
        <end position="346"/>
    </location>
</feature>
<feature type="short sequence motif" description="DEAH box">
    <location>
        <begin position="581"/>
        <end position="584"/>
    </location>
</feature>
<feature type="compositionally biased region" description="Basic and acidic residues" evidence="7">
    <location>
        <begin position="1113"/>
        <end position="1122"/>
    </location>
</feature>
<feature type="compositionally biased region" description="Basic and acidic residues" evidence="7">
    <location>
        <begin position="1177"/>
        <end position="1188"/>
    </location>
</feature>
<feature type="binding site" evidence="5">
    <location>
        <begin position="475"/>
        <end position="482"/>
    </location>
    <ligand>
        <name>ATP</name>
        <dbReference type="ChEBI" id="CHEBI:30616"/>
    </ligand>
</feature>
<keyword id="KW-0067">ATP-binding</keyword>
<keyword id="KW-0158">Chromosome</keyword>
<keyword id="KW-0175">Coiled coil</keyword>
<keyword id="KW-0227">DNA damage</keyword>
<keyword id="KW-0233">DNA recombination</keyword>
<keyword id="KW-0234">DNA repair</keyword>
<keyword id="KW-0238">DNA-binding</keyword>
<keyword id="KW-0347">Helicase</keyword>
<keyword id="KW-0378">Hydrolase</keyword>
<keyword id="KW-0413">Isomerase</keyword>
<keyword id="KW-0460">Magnesium</keyword>
<keyword id="KW-0464">Manganese</keyword>
<keyword id="KW-0479">Metal-binding</keyword>
<keyword id="KW-0547">Nucleotide-binding</keyword>
<keyword id="KW-0539">Nucleus</keyword>
<keyword id="KW-1185">Reference proteome</keyword>
<evidence type="ECO:0000250" key="1"/>
<evidence type="ECO:0000250" key="2">
    <source>
        <dbReference type="UniProtKB" id="Q9FT73"/>
    </source>
</evidence>
<evidence type="ECO:0000255" key="3"/>
<evidence type="ECO:0000255" key="4">
    <source>
        <dbReference type="PROSITE-ProRule" id="PRU00328"/>
    </source>
</evidence>
<evidence type="ECO:0000255" key="5">
    <source>
        <dbReference type="PROSITE-ProRule" id="PRU00541"/>
    </source>
</evidence>
<evidence type="ECO:0000255" key="6">
    <source>
        <dbReference type="PROSITE-ProRule" id="PRU00542"/>
    </source>
</evidence>
<evidence type="ECO:0000256" key="7">
    <source>
        <dbReference type="SAM" id="MobiDB-lite"/>
    </source>
</evidence>
<evidence type="ECO:0000269" key="8">
    <source>
    </source>
</evidence>
<evidence type="ECO:0000269" key="9">
    <source>
    </source>
</evidence>
<evidence type="ECO:0000269" key="10">
    <source>
    </source>
</evidence>
<evidence type="ECO:0000269" key="11">
    <source>
    </source>
</evidence>
<evidence type="ECO:0000269" key="12">
    <source>
    </source>
</evidence>
<evidence type="ECO:0000269" key="13">
    <source>
    </source>
</evidence>
<evidence type="ECO:0000305" key="14"/>
<accession>Q8L840</accession>
<accession>O04092</accession>
<accession>Q9FT71</accession>
<dbReference type="EC" id="5.6.2.4" evidence="2"/>
<dbReference type="EMBL" id="AJ404473">
    <property type="protein sequence ID" value="CAC14868.1"/>
    <property type="status" value="ALT_INIT"/>
    <property type="molecule type" value="mRNA"/>
</dbReference>
<dbReference type="EMBL" id="U95973">
    <property type="protein sequence ID" value="AAB65484.1"/>
    <property type="status" value="ALT_SEQ"/>
    <property type="molecule type" value="Genomic_DNA"/>
</dbReference>
<dbReference type="EMBL" id="CP002684">
    <property type="protein sequence ID" value="AEE28665.1"/>
    <property type="molecule type" value="Genomic_DNA"/>
</dbReference>
<dbReference type="EMBL" id="AY120761">
    <property type="protein sequence ID" value="AAM53319.1"/>
    <property type="molecule type" value="mRNA"/>
</dbReference>
<dbReference type="EMBL" id="BT010133">
    <property type="protein sequence ID" value="AAQ22602.1"/>
    <property type="molecule type" value="mRNA"/>
</dbReference>
<dbReference type="PIR" id="B86243">
    <property type="entry name" value="B86243"/>
</dbReference>
<dbReference type="RefSeq" id="NP_172562.2">
    <property type="nucleotide sequence ID" value="NM_100968.3"/>
</dbReference>
<dbReference type="SMR" id="Q8L840"/>
<dbReference type="FunCoup" id="Q8L840">
    <property type="interactions" value="1187"/>
</dbReference>
<dbReference type="STRING" id="3702.Q8L840"/>
<dbReference type="GlyGen" id="Q8L840">
    <property type="glycosylation" value="1 site"/>
</dbReference>
<dbReference type="PaxDb" id="3702-AT1G10930.1"/>
<dbReference type="ProteomicsDB" id="226906"/>
<dbReference type="EnsemblPlants" id="AT1G10930.1">
    <property type="protein sequence ID" value="AT1G10930.1"/>
    <property type="gene ID" value="AT1G10930"/>
</dbReference>
<dbReference type="GeneID" id="837636"/>
<dbReference type="Gramene" id="AT1G10930.1">
    <property type="protein sequence ID" value="AT1G10930.1"/>
    <property type="gene ID" value="AT1G10930"/>
</dbReference>
<dbReference type="KEGG" id="ath:AT1G10930"/>
<dbReference type="Araport" id="AT1G10930"/>
<dbReference type="TAIR" id="AT1G10930">
    <property type="gene designation" value="RECQ4A"/>
</dbReference>
<dbReference type="eggNOG" id="KOG0351">
    <property type="taxonomic scope" value="Eukaryota"/>
</dbReference>
<dbReference type="HOGENOM" id="CLU_001103_0_1_1"/>
<dbReference type="InParanoid" id="Q8L840"/>
<dbReference type="OMA" id="CTPQPSI"/>
<dbReference type="PhylomeDB" id="Q8L840"/>
<dbReference type="BRENDA" id="3.6.4.12">
    <property type="organism ID" value="399"/>
</dbReference>
<dbReference type="PRO" id="PR:Q8L840"/>
<dbReference type="Proteomes" id="UP000006548">
    <property type="component" value="Chromosome 1"/>
</dbReference>
<dbReference type="ExpressionAtlas" id="Q8L840">
    <property type="expression patterns" value="baseline and differential"/>
</dbReference>
<dbReference type="GO" id="GO:0005694">
    <property type="term" value="C:chromosome"/>
    <property type="evidence" value="ECO:0007669"/>
    <property type="project" value="UniProtKB-SubCell"/>
</dbReference>
<dbReference type="GO" id="GO:0005634">
    <property type="term" value="C:nucleus"/>
    <property type="evidence" value="ECO:0007669"/>
    <property type="project" value="UniProtKB-SubCell"/>
</dbReference>
<dbReference type="GO" id="GO:0009506">
    <property type="term" value="C:plasmodesma"/>
    <property type="evidence" value="ECO:0007005"/>
    <property type="project" value="TAIR"/>
</dbReference>
<dbReference type="GO" id="GO:0043138">
    <property type="term" value="F:3'-5' DNA helicase activity"/>
    <property type="evidence" value="ECO:0000314"/>
    <property type="project" value="UniProtKB"/>
</dbReference>
<dbReference type="GO" id="GO:0005524">
    <property type="term" value="F:ATP binding"/>
    <property type="evidence" value="ECO:0007669"/>
    <property type="project" value="UniProtKB-KW"/>
</dbReference>
<dbReference type="GO" id="GO:0016887">
    <property type="term" value="F:ATP hydrolysis activity"/>
    <property type="evidence" value="ECO:0007669"/>
    <property type="project" value="RHEA"/>
</dbReference>
<dbReference type="GO" id="GO:0003677">
    <property type="term" value="F:DNA binding"/>
    <property type="evidence" value="ECO:0007669"/>
    <property type="project" value="UniProtKB-KW"/>
</dbReference>
<dbReference type="GO" id="GO:0046872">
    <property type="term" value="F:metal ion binding"/>
    <property type="evidence" value="ECO:0007669"/>
    <property type="project" value="UniProtKB-KW"/>
</dbReference>
<dbReference type="GO" id="GO:0071215">
    <property type="term" value="P:cellular response to abscisic acid stimulus"/>
    <property type="evidence" value="ECO:0000270"/>
    <property type="project" value="UniProtKB"/>
</dbReference>
<dbReference type="GO" id="GO:0070417">
    <property type="term" value="P:cellular response to cold"/>
    <property type="evidence" value="ECO:0000270"/>
    <property type="project" value="UniProtKB"/>
</dbReference>
<dbReference type="GO" id="GO:0051276">
    <property type="term" value="P:chromosome organization"/>
    <property type="evidence" value="ECO:0000315"/>
    <property type="project" value="TAIR"/>
</dbReference>
<dbReference type="GO" id="GO:0006974">
    <property type="term" value="P:DNA damage response"/>
    <property type="evidence" value="ECO:0000315"/>
    <property type="project" value="TAIR"/>
</dbReference>
<dbReference type="GO" id="GO:0006310">
    <property type="term" value="P:DNA recombination"/>
    <property type="evidence" value="ECO:0000315"/>
    <property type="project" value="UniProtKB"/>
</dbReference>
<dbReference type="GO" id="GO:0006281">
    <property type="term" value="P:DNA repair"/>
    <property type="evidence" value="ECO:0000315"/>
    <property type="project" value="UniProtKB"/>
</dbReference>
<dbReference type="GO" id="GO:0006260">
    <property type="term" value="P:DNA replication"/>
    <property type="evidence" value="ECO:0007669"/>
    <property type="project" value="InterPro"/>
</dbReference>
<dbReference type="GO" id="GO:0000724">
    <property type="term" value="P:double-strand break repair via homologous recombination"/>
    <property type="evidence" value="ECO:0000315"/>
    <property type="project" value="TAIR"/>
</dbReference>
<dbReference type="CDD" id="cd17920">
    <property type="entry name" value="DEXHc_RecQ"/>
    <property type="match status" value="1"/>
</dbReference>
<dbReference type="CDD" id="cd18794">
    <property type="entry name" value="SF2_C_RecQ"/>
    <property type="match status" value="1"/>
</dbReference>
<dbReference type="FunFam" id="1.10.10.10:FF:000582">
    <property type="entry name" value="ATP-dependent DNA helicase Q-like 4A"/>
    <property type="match status" value="1"/>
</dbReference>
<dbReference type="FunFam" id="1.10.150.80:FF:000010">
    <property type="entry name" value="ATP-dependent DNA helicase Q-like 4A"/>
    <property type="match status" value="1"/>
</dbReference>
<dbReference type="FunFam" id="3.40.50.300:FF:000296">
    <property type="entry name" value="ATP-dependent DNA helicase RecQ"/>
    <property type="match status" value="1"/>
</dbReference>
<dbReference type="FunFam" id="3.40.50.300:FF:000340">
    <property type="entry name" value="Bloom syndrome, RecQ helicase"/>
    <property type="match status" value="1"/>
</dbReference>
<dbReference type="Gene3D" id="1.10.150.80">
    <property type="entry name" value="HRDC domain"/>
    <property type="match status" value="1"/>
</dbReference>
<dbReference type="Gene3D" id="3.40.50.300">
    <property type="entry name" value="P-loop containing nucleotide triphosphate hydrolases"/>
    <property type="match status" value="2"/>
</dbReference>
<dbReference type="Gene3D" id="1.10.10.10">
    <property type="entry name" value="Winged helix-like DNA-binding domain superfamily/Winged helix DNA-binding domain"/>
    <property type="match status" value="1"/>
</dbReference>
<dbReference type="InterPro" id="IPR011545">
    <property type="entry name" value="DEAD/DEAH_box_helicase_dom"/>
</dbReference>
<dbReference type="InterPro" id="IPR002464">
    <property type="entry name" value="DNA/RNA_helicase_DEAH_CS"/>
</dbReference>
<dbReference type="InterPro" id="IPR004589">
    <property type="entry name" value="DNA_helicase_ATP-dep_RecQ"/>
</dbReference>
<dbReference type="InterPro" id="IPR014001">
    <property type="entry name" value="Helicase_ATP-bd"/>
</dbReference>
<dbReference type="InterPro" id="IPR001650">
    <property type="entry name" value="Helicase_C-like"/>
</dbReference>
<dbReference type="InterPro" id="IPR010997">
    <property type="entry name" value="HRDC-like_sf"/>
</dbReference>
<dbReference type="InterPro" id="IPR002121">
    <property type="entry name" value="HRDC_dom"/>
</dbReference>
<dbReference type="InterPro" id="IPR044876">
    <property type="entry name" value="HRDC_dom_sf"/>
</dbReference>
<dbReference type="InterPro" id="IPR027417">
    <property type="entry name" value="P-loop_NTPase"/>
</dbReference>
<dbReference type="InterPro" id="IPR032284">
    <property type="entry name" value="RecQ_Zn-bd"/>
</dbReference>
<dbReference type="InterPro" id="IPR018982">
    <property type="entry name" value="RQC_domain"/>
</dbReference>
<dbReference type="InterPro" id="IPR036388">
    <property type="entry name" value="WH-like_DNA-bd_sf"/>
</dbReference>
<dbReference type="NCBIfam" id="TIGR00614">
    <property type="entry name" value="recQ_fam"/>
    <property type="match status" value="1"/>
</dbReference>
<dbReference type="PANTHER" id="PTHR13710:SF148">
    <property type="entry name" value="ATP-DEPENDENT DNA HELICASE Q-LIKE 4A"/>
    <property type="match status" value="1"/>
</dbReference>
<dbReference type="PANTHER" id="PTHR13710">
    <property type="entry name" value="DNA HELICASE RECQ FAMILY MEMBER"/>
    <property type="match status" value="1"/>
</dbReference>
<dbReference type="Pfam" id="PF00270">
    <property type="entry name" value="DEAD"/>
    <property type="match status" value="1"/>
</dbReference>
<dbReference type="Pfam" id="PF00271">
    <property type="entry name" value="Helicase_C"/>
    <property type="match status" value="1"/>
</dbReference>
<dbReference type="Pfam" id="PF00570">
    <property type="entry name" value="HRDC"/>
    <property type="match status" value="1"/>
</dbReference>
<dbReference type="Pfam" id="PF16124">
    <property type="entry name" value="RecQ_Zn_bind"/>
    <property type="match status" value="1"/>
</dbReference>
<dbReference type="Pfam" id="PF09382">
    <property type="entry name" value="RQC"/>
    <property type="match status" value="1"/>
</dbReference>
<dbReference type="SMART" id="SM00487">
    <property type="entry name" value="DEXDc"/>
    <property type="match status" value="1"/>
</dbReference>
<dbReference type="SMART" id="SM00490">
    <property type="entry name" value="HELICc"/>
    <property type="match status" value="1"/>
</dbReference>
<dbReference type="SMART" id="SM00956">
    <property type="entry name" value="RQC"/>
    <property type="match status" value="1"/>
</dbReference>
<dbReference type="SUPFAM" id="SSF47819">
    <property type="entry name" value="HRDC-like"/>
    <property type="match status" value="1"/>
</dbReference>
<dbReference type="SUPFAM" id="SSF52540">
    <property type="entry name" value="P-loop containing nucleoside triphosphate hydrolases"/>
    <property type="match status" value="2"/>
</dbReference>
<dbReference type="PROSITE" id="PS00690">
    <property type="entry name" value="DEAH_ATP_HELICASE"/>
    <property type="match status" value="1"/>
</dbReference>
<dbReference type="PROSITE" id="PS00018">
    <property type="entry name" value="EF_HAND_1"/>
    <property type="match status" value="1"/>
</dbReference>
<dbReference type="PROSITE" id="PS51192">
    <property type="entry name" value="HELICASE_ATP_BIND_1"/>
    <property type="match status" value="1"/>
</dbReference>
<dbReference type="PROSITE" id="PS51194">
    <property type="entry name" value="HELICASE_CTER"/>
    <property type="match status" value="1"/>
</dbReference>
<dbReference type="PROSITE" id="PS50967">
    <property type="entry name" value="HRDC"/>
    <property type="match status" value="1"/>
</dbReference>
<comment type="function">
    <text evidence="2 10 11 12 13">DNA helicase involved in DNA repair (PubMed:16146519, PubMed:18000056, PubMed:19096507). Probably unwinds DNA in the 3'-5' direction (By similarity). Required for the maintenance of genome stability by modulation of the DNA damage response and repression of crossovers. Confers resistance to genotoxic stress (PubMed:16146519, PubMed:18000056). Suppresses spontaneous homologous recombination (HR) events in somatic cells together with its partners RMI1 and TOP3A (PubMed:19096507). Contributes to the maintenance of chromosome integrity during meiosis. Involved in the removal of telomeric bridges that appear to arise during meiotic recombination. Required to resolve or dissolve MSH4-dependent telomeric associations. Does not seem required for chiasma formation (PubMed:21265901).</text>
</comment>
<comment type="catalytic activity">
    <reaction evidence="2">
        <text>Couples ATP hydrolysis with the unwinding of duplex DNA by translocating in the 3'-5' direction.</text>
        <dbReference type="EC" id="5.6.2.4"/>
    </reaction>
</comment>
<comment type="catalytic activity">
    <reaction evidence="2">
        <text>ATP + H2O = ADP + phosphate + H(+)</text>
        <dbReference type="Rhea" id="RHEA:13065"/>
        <dbReference type="ChEBI" id="CHEBI:15377"/>
        <dbReference type="ChEBI" id="CHEBI:15378"/>
        <dbReference type="ChEBI" id="CHEBI:30616"/>
        <dbReference type="ChEBI" id="CHEBI:43474"/>
        <dbReference type="ChEBI" id="CHEBI:456216"/>
    </reaction>
</comment>
<comment type="cofactor">
    <cofactor evidence="1">
        <name>Mg(2+)</name>
        <dbReference type="ChEBI" id="CHEBI:18420"/>
    </cofactor>
    <cofactor evidence="1">
        <name>Mn(2+)</name>
        <dbReference type="ChEBI" id="CHEBI:29035"/>
    </cofactor>
</comment>
<comment type="subcellular location">
    <subcellularLocation>
        <location evidence="13">Nucleus</location>
    </subcellularLocation>
    <subcellularLocation>
        <location evidence="13">Chromosome</location>
    </subcellularLocation>
    <text evidence="13">Associates with recombination intermediates and telomeres of meiotic chromosomes.</text>
</comment>
<comment type="tissue specificity">
    <text evidence="8 9">Expressed in roots, seedlings, young leaves, shoots, shoot apical mersitem, inflorescences, flowers, siliques and seeds.</text>
</comment>
<comment type="induction">
    <text evidence="9">By cold. Repressed by abscisic acid (ABA).</text>
</comment>
<comment type="disruption phenotype">
    <text evidence="10 11">Enhanced sensitivity to genotoxic stress such as UV light, methyl methanesulfonate (MMS) and mitomycin C (MMC), and hyperrecombination (HR) during cell division.</text>
</comment>
<comment type="similarity">
    <text evidence="14">Belongs to the helicase family. RecQ subfamily.</text>
</comment>
<comment type="sequence caution" evidence="14">
    <conflict type="erroneous gene model prediction">
        <sequence resource="EMBL-CDS" id="AAB65484"/>
    </conflict>
</comment>
<comment type="sequence caution" evidence="14">
    <conflict type="erroneous initiation">
        <sequence resource="EMBL-CDS" id="CAC14868"/>
    </conflict>
    <text>Truncated N-terminus.</text>
</comment>
<proteinExistence type="evidence at transcript level"/>
<organism>
    <name type="scientific">Arabidopsis thaliana</name>
    <name type="common">Mouse-ear cress</name>
    <dbReference type="NCBI Taxonomy" id="3702"/>
    <lineage>
        <taxon>Eukaryota</taxon>
        <taxon>Viridiplantae</taxon>
        <taxon>Streptophyta</taxon>
        <taxon>Embryophyta</taxon>
        <taxon>Tracheophyta</taxon>
        <taxon>Spermatophyta</taxon>
        <taxon>Magnoliopsida</taxon>
        <taxon>eudicotyledons</taxon>
        <taxon>Gunneridae</taxon>
        <taxon>Pentapetalae</taxon>
        <taxon>rosids</taxon>
        <taxon>malvids</taxon>
        <taxon>Brassicales</taxon>
        <taxon>Brassicaceae</taxon>
        <taxon>Camelineae</taxon>
        <taxon>Arabidopsis</taxon>
    </lineage>
</organism>
<sequence>MINSNQMSRSHLPEVQKPRGPQTNWSEHAKALESSSSVTKFLSSNVLYALESQKPRDMAARSIAFPSVNVHTLAHPQISKAWRALSSLSVNNTYLRPGVTPPIDVGTNDSYSARERSTAKVISSTGGSVYSSTRPNLSAMNVSGTGRSFHSFPSSVPGDDKIVAEKFPRGNNEIRESEPSCTHLNGVEKSFGNSAFPAEQFESRKACLDDMDDDDILENIDVDQIVMEHYHSTSTPQPSVSNFSLRTPPVDRSASRLEEECNLPPELCSNCSHGIKLGLCPEASTHVEQMKDVLLAISNELLDDATDLSPDRVGQLRQERLRLKKQIQQLENHIRDKESQKSQFLSSTATRIFQYETPKSTNYKMDQPQTDFRAHVSDQGRYACDSWNTPRDSSFSVDRYGLSSAPVEREQYVPKIIDVTYTEGSNDKKWSSREFPWTRKLEVNNKKVFGNHSFRPNQREIINATMSGSDVFVLMPTGGGKSLTYQLPALICGGITLVISPLVSLIQDQIMNLLQANIPAASLSAGMEWAEQLKIFQELNSEHSKYKLLYVTPEKVAKSDSLLRHLENLNSRGLLARFVIDEAHCVSQWGHDFRPDYQSLGILKQKFPNIPVLALTATATASVKEDVVQALGLVNCVVFRQSFNRPNLWYSVVPKTKKCLEDIDKFIKENHFDECGIIYCLSRMDCEKVSERLQEFGHKAAFYHGSMEPEQRAFIQTQWSKDEINIICATVAFGMGINKPDVRFVIHHSLPKSIEGYHQECGRAGRDGQRSSCVLYYGYGDYIRVKHMISQGGVDQSPMATGYNRVASSGRLLETNTENLLRMVRYCENEVECRRFLQLVHLGEKFDSTNCKKTCDNCCSSQSLIDKDVTLITRQLVELVKQTGERFSSAHILEVYRGSLNQMVKKHRHETLQFHGAGKHLSKIEVSRILHYLVTEDILVEDVRKSDMYGSVSSLLQVNNAKATILFSGSQTIVMKFPSSVKVLKPSKQGATAAKGPLTSEKQSTLPLTTEDAPPKDVNLSANMYTALRKLRTALVKEAPDGVMAYHIFINSTLQQISRRIPRTKEELLEINGLGKAKVSKYGDQLLETIETTVNEYYGTNKKDSIISNDSPDSGKRRRDENISPNVAEDDDFEVSPSQSCKKTVRNKSNEVLHGECIDGDRRGMELDFDFKDEDGSEIRPEGRVLPW</sequence>
<gene>
    <name type="primary">RECQL4A</name>
    <name type="synonym">RECQ4A</name>
    <name type="synonym">RQL4A</name>
    <name type="synonym">SGS1</name>
    <name type="ordered locus">At1g10930</name>
    <name type="ORF">T19D16.15</name>
</gene>
<reference key="1">
    <citation type="journal article" date="2000" name="Nucleic Acids Res.">
        <title>Molecular characterisation of RecQ homologues in Arabidopsis thaliana.</title>
        <authorList>
            <person name="Hartung F."/>
            <person name="Plchova H."/>
            <person name="Puchta H."/>
        </authorList>
    </citation>
    <scope>NUCLEOTIDE SEQUENCE [MRNA]</scope>
    <scope>TISSUE SPECIFICITY</scope>
    <source>
        <strain>cv. Columbia</strain>
        <tissue>Flower</tissue>
    </source>
</reference>
<reference key="2">
    <citation type="journal article" date="2000" name="Nature">
        <title>Sequence and analysis of chromosome 1 of the plant Arabidopsis thaliana.</title>
        <authorList>
            <person name="Theologis A."/>
            <person name="Ecker J.R."/>
            <person name="Palm C.J."/>
            <person name="Federspiel N.A."/>
            <person name="Kaul S."/>
            <person name="White O."/>
            <person name="Alonso J."/>
            <person name="Altafi H."/>
            <person name="Araujo R."/>
            <person name="Bowman C.L."/>
            <person name="Brooks S.Y."/>
            <person name="Buehler E."/>
            <person name="Chan A."/>
            <person name="Chao Q."/>
            <person name="Chen H."/>
            <person name="Cheuk R.F."/>
            <person name="Chin C.W."/>
            <person name="Chung M.K."/>
            <person name="Conn L."/>
            <person name="Conway A.B."/>
            <person name="Conway A.R."/>
            <person name="Creasy T.H."/>
            <person name="Dewar K."/>
            <person name="Dunn P."/>
            <person name="Etgu P."/>
            <person name="Feldblyum T.V."/>
            <person name="Feng J.-D."/>
            <person name="Fong B."/>
            <person name="Fujii C.Y."/>
            <person name="Gill J.E."/>
            <person name="Goldsmith A.D."/>
            <person name="Haas B."/>
            <person name="Hansen N.F."/>
            <person name="Hughes B."/>
            <person name="Huizar L."/>
            <person name="Hunter J.L."/>
            <person name="Jenkins J."/>
            <person name="Johnson-Hopson C."/>
            <person name="Khan S."/>
            <person name="Khaykin E."/>
            <person name="Kim C.J."/>
            <person name="Koo H.L."/>
            <person name="Kremenetskaia I."/>
            <person name="Kurtz D.B."/>
            <person name="Kwan A."/>
            <person name="Lam B."/>
            <person name="Langin-Hooper S."/>
            <person name="Lee A."/>
            <person name="Lee J.M."/>
            <person name="Lenz C.A."/>
            <person name="Li J.H."/>
            <person name="Li Y.-P."/>
            <person name="Lin X."/>
            <person name="Liu S.X."/>
            <person name="Liu Z.A."/>
            <person name="Luros J.S."/>
            <person name="Maiti R."/>
            <person name="Marziali A."/>
            <person name="Militscher J."/>
            <person name="Miranda M."/>
            <person name="Nguyen M."/>
            <person name="Nierman W.C."/>
            <person name="Osborne B.I."/>
            <person name="Pai G."/>
            <person name="Peterson J."/>
            <person name="Pham P.K."/>
            <person name="Rizzo M."/>
            <person name="Rooney T."/>
            <person name="Rowley D."/>
            <person name="Sakano H."/>
            <person name="Salzberg S.L."/>
            <person name="Schwartz J.R."/>
            <person name="Shinn P."/>
            <person name="Southwick A.M."/>
            <person name="Sun H."/>
            <person name="Tallon L.J."/>
            <person name="Tambunga G."/>
            <person name="Toriumi M.J."/>
            <person name="Town C.D."/>
            <person name="Utterback T."/>
            <person name="Van Aken S."/>
            <person name="Vaysberg M."/>
            <person name="Vysotskaia V.S."/>
            <person name="Walker M."/>
            <person name="Wu D."/>
            <person name="Yu G."/>
            <person name="Fraser C.M."/>
            <person name="Venter J.C."/>
            <person name="Davis R.W."/>
        </authorList>
    </citation>
    <scope>NUCLEOTIDE SEQUENCE [LARGE SCALE GENOMIC DNA]</scope>
    <source>
        <strain>cv. Columbia</strain>
    </source>
</reference>
<reference key="3">
    <citation type="journal article" date="2017" name="Plant J.">
        <title>Araport11: a complete reannotation of the Arabidopsis thaliana reference genome.</title>
        <authorList>
            <person name="Cheng C.Y."/>
            <person name="Krishnakumar V."/>
            <person name="Chan A.P."/>
            <person name="Thibaud-Nissen F."/>
            <person name="Schobel S."/>
            <person name="Town C.D."/>
        </authorList>
    </citation>
    <scope>GENOME REANNOTATION</scope>
    <source>
        <strain>cv. Columbia</strain>
    </source>
</reference>
<reference key="4">
    <citation type="journal article" date="2003" name="Science">
        <title>Empirical analysis of transcriptional activity in the Arabidopsis genome.</title>
        <authorList>
            <person name="Yamada K."/>
            <person name="Lim J."/>
            <person name="Dale J.M."/>
            <person name="Chen H."/>
            <person name="Shinn P."/>
            <person name="Palm C.J."/>
            <person name="Southwick A.M."/>
            <person name="Wu H.C."/>
            <person name="Kim C.J."/>
            <person name="Nguyen M."/>
            <person name="Pham P.K."/>
            <person name="Cheuk R.F."/>
            <person name="Karlin-Newmann G."/>
            <person name="Liu S.X."/>
            <person name="Lam B."/>
            <person name="Sakano H."/>
            <person name="Wu T."/>
            <person name="Yu G."/>
            <person name="Miranda M."/>
            <person name="Quach H.L."/>
            <person name="Tripp M."/>
            <person name="Chang C.H."/>
            <person name="Lee J.M."/>
            <person name="Toriumi M.J."/>
            <person name="Chan M.M."/>
            <person name="Tang C.C."/>
            <person name="Onodera C.S."/>
            <person name="Deng J.M."/>
            <person name="Akiyama K."/>
            <person name="Ansari Y."/>
            <person name="Arakawa T."/>
            <person name="Banh J."/>
            <person name="Banno F."/>
            <person name="Bowser L."/>
            <person name="Brooks S.Y."/>
            <person name="Carninci P."/>
            <person name="Chao Q."/>
            <person name="Choy N."/>
            <person name="Enju A."/>
            <person name="Goldsmith A.D."/>
            <person name="Gurjal M."/>
            <person name="Hansen N.F."/>
            <person name="Hayashizaki Y."/>
            <person name="Johnson-Hopson C."/>
            <person name="Hsuan V.W."/>
            <person name="Iida K."/>
            <person name="Karnes M."/>
            <person name="Khan S."/>
            <person name="Koesema E."/>
            <person name="Ishida J."/>
            <person name="Jiang P.X."/>
            <person name="Jones T."/>
            <person name="Kawai J."/>
            <person name="Kamiya A."/>
            <person name="Meyers C."/>
            <person name="Nakajima M."/>
            <person name="Narusaka M."/>
            <person name="Seki M."/>
            <person name="Sakurai T."/>
            <person name="Satou M."/>
            <person name="Tamse R."/>
            <person name="Vaysberg M."/>
            <person name="Wallender E.K."/>
            <person name="Wong C."/>
            <person name="Yamamura Y."/>
            <person name="Yuan S."/>
            <person name="Shinozaki K."/>
            <person name="Davis R.W."/>
            <person name="Theologis A."/>
            <person name="Ecker J.R."/>
        </authorList>
    </citation>
    <scope>NUCLEOTIDE SEQUENCE [LARGE SCALE MRNA]</scope>
    <source>
        <strain>cv. Columbia</strain>
    </source>
</reference>
<reference key="5">
    <citation type="journal article" date="2003" name="Plant Mol. Biol.">
        <title>Arabidopsis RecQsim, a plant-specific member of the RecQ helicase family, can suppress the MMS hypersensitivity of the yeast sgs1 mutant.</title>
        <authorList>
            <person name="Bagherieh-Najjar M.B."/>
            <person name="de Vries O.M."/>
            <person name="Kroon J.T."/>
            <person name="Wright E.L."/>
            <person name="Elborough K.M."/>
            <person name="Hille J."/>
            <person name="Dijkwel P.P."/>
        </authorList>
    </citation>
    <scope>TISSUE SPECIFICITY</scope>
    <scope>INDUCTION BY ABIOTIC STRESSES</scope>
</reference>
<reference key="6">
    <citation type="journal article" date="2005" name="Plant J.">
        <title>Arabidopsis RecQI4A suppresses homologous recombination and modulates DNA damage responses.</title>
        <authorList>
            <person name="Bagherieh-Najjar M.B."/>
            <person name="de Vries O.M."/>
            <person name="Hille J."/>
            <person name="Dijkwel P.P."/>
        </authorList>
    </citation>
    <scope>FUNCTION</scope>
    <scope>DISRUPTION PHENOTYPE</scope>
</reference>
<reference key="7">
    <citation type="journal article" date="2006" name="J. Plant Physiol.">
        <title>The RecQ gene family in plants.</title>
        <authorList>
            <person name="Hartung F."/>
            <person name="Puchta H."/>
        </authorList>
    </citation>
    <scope>GENE FAMILY</scope>
    <scope>NOMENCLATURE</scope>
</reference>
<reference key="8">
    <citation type="journal article" date="2007" name="Proc. Natl. Acad. Sci. U.S.A.">
        <title>Two closely related RecQ helicases have antagonistic roles in homologous recombination and DNA repair in Arabidopsis thaliana.</title>
        <authorList>
            <person name="Hartung F."/>
            <person name="Suer S."/>
            <person name="Puchta H."/>
        </authorList>
    </citation>
    <scope>FUNCTION</scope>
    <scope>DISRUPTION PHENOTYPE</scope>
</reference>
<reference key="9">
    <citation type="journal article" date="2008" name="PLoS Genet.">
        <title>Topoisomerase 3alpha and RMI1 suppress somatic crossovers and are essential for resolution of meiotic recombination intermediates in Arabidopsis thaliana.</title>
        <authorList>
            <person name="Hartung F."/>
            <person name="Suer S."/>
            <person name="Knoll A."/>
            <person name="Wurz-Wildersinn R."/>
            <person name="Puchta H."/>
        </authorList>
    </citation>
    <scope>FUNCTION</scope>
</reference>
<reference key="10">
    <citation type="journal article" date="2011" name="Plant J.">
        <title>The RecQ helicase AtRECQ4A is required to remove inter-chromosomal telomeric connections that arise during meiotic recombination in Arabidopsis.</title>
        <authorList>
            <person name="Higgins J.D."/>
            <person name="Ferdous M."/>
            <person name="Osman K."/>
            <person name="Franklin F.C."/>
        </authorList>
    </citation>
    <scope>FUNCTION</scope>
    <scope>SUBCELLULAR LOCATION</scope>
</reference>
<reference key="11">
    <citation type="journal article" date="2013" name="PLoS ONE">
        <title>Genome-wide comparative in silico analysis of the RNA helicase gene family in Zea mays and Glycine max: a comparison with Arabidopsis and Oryza sativa.</title>
        <authorList>
            <person name="Xu R."/>
            <person name="Zhang S."/>
            <person name="Huang J."/>
            <person name="Zheng C."/>
        </authorList>
    </citation>
    <scope>GENE FAMILY</scope>
</reference>
<protein>
    <recommendedName>
        <fullName>ATP-dependent DNA helicase Q-like 4A</fullName>
        <ecNumber evidence="2">5.6.2.4</ecNumber>
    </recommendedName>
    <alternativeName>
        <fullName evidence="14">DNA 3'-5' helicase RecQ4A</fullName>
    </alternativeName>
    <alternativeName>
        <fullName>RecQ-like protein 4A</fullName>
        <shortName>AtRecQ4A</shortName>
        <shortName>AtRecQl4A</shortName>
    </alternativeName>
    <alternativeName>
        <fullName>SGS1-like protein</fullName>
        <shortName>AtSGS1</shortName>
    </alternativeName>
</protein>